<accession>B6YQ29</accession>
<keyword id="KW-0028">Amino-acid biosynthesis</keyword>
<keyword id="KW-0963">Cytoplasm</keyword>
<keyword id="KW-0368">Histidine biosynthesis</keyword>
<keyword id="KW-0413">Isomerase</keyword>
<keyword id="KW-1185">Reference proteome</keyword>
<evidence type="ECO:0000255" key="1">
    <source>
        <dbReference type="HAMAP-Rule" id="MF_01014"/>
    </source>
</evidence>
<organism>
    <name type="scientific">Azobacteroides pseudotrichonymphae genomovar. CFP2</name>
    <dbReference type="NCBI Taxonomy" id="511995"/>
    <lineage>
        <taxon>Bacteria</taxon>
        <taxon>Pseudomonadati</taxon>
        <taxon>Bacteroidota</taxon>
        <taxon>Bacteroidia</taxon>
        <taxon>Bacteroidales</taxon>
        <taxon>Candidatus Azobacteroides</taxon>
    </lineage>
</organism>
<proteinExistence type="inferred from homology"/>
<sequence>MIEIILAIDIIEGKAVRLTQGDYKQKKIYNQDPLEVAKKFEDYGIRRLHLVDLDGAKANFIVNYKILERIASHTSLIIDFSGGLKSDSDLKIAFNSGAKMVTGGSIAVKNPKIFKNWINKFGANCILLGADCRNNKIAVNGWTEETNEEILPFIKKWRKYGITKVICTDISKDGMLKGTSTELYKTIKKEDTSIYLIASGGVSCIYDIDMLQEAGLSGVIIGKAIYESKIQLKELKKYAC</sequence>
<feature type="chain" id="PRO_1000135077" description="1-(5-phosphoribosyl)-5-[(5-phosphoribosylamino)methylideneamino] imidazole-4-carboxamide isomerase">
    <location>
        <begin position="1"/>
        <end position="240"/>
    </location>
</feature>
<feature type="active site" description="Proton acceptor" evidence="1">
    <location>
        <position position="9"/>
    </location>
</feature>
<feature type="active site" description="Proton donor" evidence="1">
    <location>
        <position position="131"/>
    </location>
</feature>
<protein>
    <recommendedName>
        <fullName evidence="1">1-(5-phosphoribosyl)-5-[(5-phosphoribosylamino)methylideneamino] imidazole-4-carboxamide isomerase</fullName>
        <ecNumber evidence="1">5.3.1.16</ecNumber>
    </recommendedName>
    <alternativeName>
        <fullName evidence="1">Phosphoribosylformimino-5-aminoimidazole carboxamide ribotide isomerase</fullName>
    </alternativeName>
</protein>
<reference key="1">
    <citation type="journal article" date="2008" name="Science">
        <title>Genome of an endosymbiont coupling N2 fixation to cellulolysis within RT protist cells in termite gut.</title>
        <authorList>
            <person name="Hongoh Y."/>
            <person name="Sharma V.K."/>
            <person name="Prakash T."/>
            <person name="Noda S."/>
            <person name="Toh H."/>
            <person name="Taylor T.D."/>
            <person name="Kudo T."/>
            <person name="Sakaki Y."/>
            <person name="Toyoda A."/>
            <person name="Hattori M."/>
            <person name="Ohkuma M."/>
        </authorList>
    </citation>
    <scope>NUCLEOTIDE SEQUENCE [LARGE SCALE GENOMIC DNA]</scope>
</reference>
<gene>
    <name evidence="1" type="primary">hisA</name>
    <name type="ordered locus">CFPG_038</name>
</gene>
<dbReference type="EC" id="5.3.1.16" evidence="1"/>
<dbReference type="EMBL" id="AP010656">
    <property type="protein sequence ID" value="BAG83301.1"/>
    <property type="molecule type" value="Genomic_DNA"/>
</dbReference>
<dbReference type="RefSeq" id="WP_012573062.1">
    <property type="nucleotide sequence ID" value="NC_011565.1"/>
</dbReference>
<dbReference type="SMR" id="B6YQ29"/>
<dbReference type="STRING" id="511995.CFPG_038"/>
<dbReference type="KEGG" id="aps:CFPG_038"/>
<dbReference type="eggNOG" id="COG0106">
    <property type="taxonomic scope" value="Bacteria"/>
</dbReference>
<dbReference type="HOGENOM" id="CLU_048577_1_2_10"/>
<dbReference type="OrthoDB" id="9807749at2"/>
<dbReference type="UniPathway" id="UPA00031">
    <property type="reaction ID" value="UER00009"/>
</dbReference>
<dbReference type="Proteomes" id="UP000000723">
    <property type="component" value="Chromosome"/>
</dbReference>
<dbReference type="GO" id="GO:0005737">
    <property type="term" value="C:cytoplasm"/>
    <property type="evidence" value="ECO:0007669"/>
    <property type="project" value="UniProtKB-SubCell"/>
</dbReference>
<dbReference type="GO" id="GO:0003949">
    <property type="term" value="F:1-(5-phosphoribosyl)-5-[(5-phosphoribosylamino)methylideneamino]imidazole-4-carboxamide isomerase activity"/>
    <property type="evidence" value="ECO:0007669"/>
    <property type="project" value="UniProtKB-UniRule"/>
</dbReference>
<dbReference type="GO" id="GO:0000105">
    <property type="term" value="P:L-histidine biosynthetic process"/>
    <property type="evidence" value="ECO:0007669"/>
    <property type="project" value="UniProtKB-UniRule"/>
</dbReference>
<dbReference type="GO" id="GO:0000162">
    <property type="term" value="P:L-tryptophan biosynthetic process"/>
    <property type="evidence" value="ECO:0007669"/>
    <property type="project" value="TreeGrafter"/>
</dbReference>
<dbReference type="CDD" id="cd04732">
    <property type="entry name" value="HisA"/>
    <property type="match status" value="1"/>
</dbReference>
<dbReference type="FunFam" id="3.20.20.70:FF:000009">
    <property type="entry name" value="1-(5-phosphoribosyl)-5-[(5-phosphoribosylamino)methylideneamino] imidazole-4-carboxamide isomerase"/>
    <property type="match status" value="1"/>
</dbReference>
<dbReference type="Gene3D" id="3.20.20.70">
    <property type="entry name" value="Aldolase class I"/>
    <property type="match status" value="1"/>
</dbReference>
<dbReference type="HAMAP" id="MF_01014">
    <property type="entry name" value="HisA"/>
    <property type="match status" value="1"/>
</dbReference>
<dbReference type="InterPro" id="IPR013785">
    <property type="entry name" value="Aldolase_TIM"/>
</dbReference>
<dbReference type="InterPro" id="IPR006062">
    <property type="entry name" value="His_biosynth"/>
</dbReference>
<dbReference type="InterPro" id="IPR006063">
    <property type="entry name" value="HisA_bact_arch"/>
</dbReference>
<dbReference type="InterPro" id="IPR044524">
    <property type="entry name" value="Isoase_HisA-like"/>
</dbReference>
<dbReference type="InterPro" id="IPR023016">
    <property type="entry name" value="Isoase_HisA-like_bact"/>
</dbReference>
<dbReference type="InterPro" id="IPR011060">
    <property type="entry name" value="RibuloseP-bd_barrel"/>
</dbReference>
<dbReference type="NCBIfam" id="TIGR00007">
    <property type="entry name" value="1-(5-phosphoribosyl)-5-[(5-phosphoribosylamino)methylideneamino]imidazole-4-carboxamide isomerase"/>
    <property type="match status" value="1"/>
</dbReference>
<dbReference type="PANTHER" id="PTHR43090">
    <property type="entry name" value="1-(5-PHOSPHORIBOSYL)-5-[(5-PHOSPHORIBOSYLAMINO)METHYLIDENEAMINO] IMIDAZOLE-4-CARBOXAMIDE ISOMERASE"/>
    <property type="match status" value="1"/>
</dbReference>
<dbReference type="PANTHER" id="PTHR43090:SF2">
    <property type="entry name" value="1-(5-PHOSPHORIBOSYL)-5-[(5-PHOSPHORIBOSYLAMINO)METHYLIDENEAMINO] IMIDAZOLE-4-CARBOXAMIDE ISOMERASE"/>
    <property type="match status" value="1"/>
</dbReference>
<dbReference type="Pfam" id="PF00977">
    <property type="entry name" value="His_biosynth"/>
    <property type="match status" value="1"/>
</dbReference>
<dbReference type="SUPFAM" id="SSF51366">
    <property type="entry name" value="Ribulose-phoshate binding barrel"/>
    <property type="match status" value="1"/>
</dbReference>
<name>HIS4_AZOPC</name>
<comment type="catalytic activity">
    <reaction evidence="1">
        <text>1-(5-phospho-beta-D-ribosyl)-5-[(5-phospho-beta-D-ribosylamino)methylideneamino]imidazole-4-carboxamide = 5-[(5-phospho-1-deoxy-D-ribulos-1-ylimino)methylamino]-1-(5-phospho-beta-D-ribosyl)imidazole-4-carboxamide</text>
        <dbReference type="Rhea" id="RHEA:15469"/>
        <dbReference type="ChEBI" id="CHEBI:58435"/>
        <dbReference type="ChEBI" id="CHEBI:58525"/>
        <dbReference type="EC" id="5.3.1.16"/>
    </reaction>
</comment>
<comment type="pathway">
    <text evidence="1">Amino-acid biosynthesis; L-histidine biosynthesis; L-histidine from 5-phospho-alpha-D-ribose 1-diphosphate: step 4/9.</text>
</comment>
<comment type="subcellular location">
    <subcellularLocation>
        <location evidence="1">Cytoplasm</location>
    </subcellularLocation>
</comment>
<comment type="similarity">
    <text evidence="1">Belongs to the HisA/HisF family.</text>
</comment>